<proteinExistence type="inferred from homology"/>
<evidence type="ECO:0000250" key="1"/>
<evidence type="ECO:0000255" key="2"/>
<evidence type="ECO:0000305" key="3"/>
<sequence length="338" mass="37453">MTTTTTTTTNTNTTNLDPLLPWVEKYRPILIKDIVGNEETVSRLESISKDGNLPNIIISGPPGTGKTSSILCLARALLGANYKEAVYELNASDDRTLDVVRDKIKSFAMKKVTLPAGRHKIIILDEVDSMTSGAQQALRRIMEIYSGTTRFAFACNQSTKIIEPIQSRCAVLRFTRLSDSQILTRLREVVQIEKVPYTDDGLAAIIFTAEGDMRQALNNLQATHSGFGLINAENVTKVCDQPHPLIIKQIIALCAKSDFKEAYPFLKKLWDDGYSSIDIISALFSITKSSNNIPEYQKLEFLKEIGFCNLRATTGVNTLVQLTGLLSKLCLVSIKMKN</sequence>
<gene>
    <name type="primary">rfc2</name>
    <name type="ORF">DDB_G0291868</name>
</gene>
<dbReference type="EMBL" id="AAFI02000186">
    <property type="protein sequence ID" value="EAL61464.1"/>
    <property type="molecule type" value="Genomic_DNA"/>
</dbReference>
<dbReference type="RefSeq" id="XP_629875.1">
    <property type="nucleotide sequence ID" value="XM_629873.1"/>
</dbReference>
<dbReference type="SMR" id="Q54E21"/>
<dbReference type="FunCoup" id="Q54E21">
    <property type="interactions" value="536"/>
</dbReference>
<dbReference type="STRING" id="44689.Q54E21"/>
<dbReference type="PaxDb" id="44689-DDB0232231"/>
<dbReference type="EnsemblProtists" id="EAL61464">
    <property type="protein sequence ID" value="EAL61464"/>
    <property type="gene ID" value="DDB_G0291868"/>
</dbReference>
<dbReference type="GeneID" id="8628373"/>
<dbReference type="KEGG" id="ddi:DDB_G0291868"/>
<dbReference type="dictyBase" id="DDB_G0291868">
    <property type="gene designation" value="rfc2"/>
</dbReference>
<dbReference type="VEuPathDB" id="AmoebaDB:DDB_G0291868"/>
<dbReference type="eggNOG" id="KOG0991">
    <property type="taxonomic scope" value="Eukaryota"/>
</dbReference>
<dbReference type="HOGENOM" id="CLU_042324_0_1_1"/>
<dbReference type="InParanoid" id="Q54E21"/>
<dbReference type="OMA" id="SCNYSSQ"/>
<dbReference type="PhylomeDB" id="Q54E21"/>
<dbReference type="Reactome" id="R-DDI-110314">
    <property type="pathway name" value="Recognition of DNA damage by PCNA-containing replication complex"/>
</dbReference>
<dbReference type="Reactome" id="R-DDI-176187">
    <property type="pathway name" value="Activation of ATR in response to replication stress"/>
</dbReference>
<dbReference type="Reactome" id="R-DDI-5651801">
    <property type="pathway name" value="PCNA-Dependent Long Patch Base Excision Repair"/>
</dbReference>
<dbReference type="Reactome" id="R-DDI-5655862">
    <property type="pathway name" value="Translesion synthesis by POLK"/>
</dbReference>
<dbReference type="Reactome" id="R-DDI-5656169">
    <property type="pathway name" value="Termination of translesion DNA synthesis"/>
</dbReference>
<dbReference type="Reactome" id="R-DDI-5696397">
    <property type="pathway name" value="Gap-filling DNA repair synthesis and ligation in GG-NER"/>
</dbReference>
<dbReference type="Reactome" id="R-DDI-6782135">
    <property type="pathway name" value="Dual incision in TC-NER"/>
</dbReference>
<dbReference type="Reactome" id="R-DDI-6782210">
    <property type="pathway name" value="Gap-filling DNA repair synthesis and ligation in TC-NER"/>
</dbReference>
<dbReference type="Reactome" id="R-DDI-69091">
    <property type="pathway name" value="Polymerase switching"/>
</dbReference>
<dbReference type="PRO" id="PR:Q54E21"/>
<dbReference type="Proteomes" id="UP000002195">
    <property type="component" value="Chromosome 6"/>
</dbReference>
<dbReference type="GO" id="GO:0005663">
    <property type="term" value="C:DNA replication factor C complex"/>
    <property type="evidence" value="ECO:0000250"/>
    <property type="project" value="dictyBase"/>
</dbReference>
<dbReference type="GO" id="GO:0031391">
    <property type="term" value="C:Elg1 RFC-like complex"/>
    <property type="evidence" value="ECO:0000250"/>
    <property type="project" value="dictyBase"/>
</dbReference>
<dbReference type="GO" id="GO:0005634">
    <property type="term" value="C:nucleus"/>
    <property type="evidence" value="ECO:0000318"/>
    <property type="project" value="GO_Central"/>
</dbReference>
<dbReference type="GO" id="GO:0005524">
    <property type="term" value="F:ATP binding"/>
    <property type="evidence" value="ECO:0007669"/>
    <property type="project" value="UniProtKB-KW"/>
</dbReference>
<dbReference type="GO" id="GO:0016887">
    <property type="term" value="F:ATP hydrolysis activity"/>
    <property type="evidence" value="ECO:0007669"/>
    <property type="project" value="InterPro"/>
</dbReference>
<dbReference type="GO" id="GO:0003677">
    <property type="term" value="F:DNA binding"/>
    <property type="evidence" value="ECO:0007669"/>
    <property type="project" value="InterPro"/>
</dbReference>
<dbReference type="GO" id="GO:0003689">
    <property type="term" value="F:DNA clamp loader activity"/>
    <property type="evidence" value="ECO:0000250"/>
    <property type="project" value="dictyBase"/>
</dbReference>
<dbReference type="GO" id="GO:0006281">
    <property type="term" value="P:DNA repair"/>
    <property type="evidence" value="ECO:0000318"/>
    <property type="project" value="GO_Central"/>
</dbReference>
<dbReference type="GO" id="GO:0006261">
    <property type="term" value="P:DNA-templated DNA replication"/>
    <property type="evidence" value="ECO:0000318"/>
    <property type="project" value="GO_Central"/>
</dbReference>
<dbReference type="GO" id="GO:0006272">
    <property type="term" value="P:leading strand elongation"/>
    <property type="evidence" value="ECO:0000250"/>
    <property type="project" value="dictyBase"/>
</dbReference>
<dbReference type="CDD" id="cd00009">
    <property type="entry name" value="AAA"/>
    <property type="match status" value="1"/>
</dbReference>
<dbReference type="CDD" id="cd18140">
    <property type="entry name" value="HLD_clamp_RFC"/>
    <property type="match status" value="1"/>
</dbReference>
<dbReference type="FunFam" id="1.10.8.60:FF:000012">
    <property type="entry name" value="Replication factor C subunit 4"/>
    <property type="match status" value="1"/>
</dbReference>
<dbReference type="FunFam" id="1.20.272.10:FF:000015">
    <property type="entry name" value="Replication factor C subunit 4"/>
    <property type="match status" value="1"/>
</dbReference>
<dbReference type="FunFam" id="3.40.50.300:FF:000107">
    <property type="entry name" value="Replication factor C subunit 4"/>
    <property type="match status" value="1"/>
</dbReference>
<dbReference type="Gene3D" id="1.10.8.60">
    <property type="match status" value="1"/>
</dbReference>
<dbReference type="Gene3D" id="1.20.272.10">
    <property type="match status" value="1"/>
</dbReference>
<dbReference type="Gene3D" id="3.40.50.300">
    <property type="entry name" value="P-loop containing nucleotide triphosphate hydrolases"/>
    <property type="match status" value="1"/>
</dbReference>
<dbReference type="InterPro" id="IPR003593">
    <property type="entry name" value="AAA+_ATPase"/>
</dbReference>
<dbReference type="InterPro" id="IPR003959">
    <property type="entry name" value="ATPase_AAA_core"/>
</dbReference>
<dbReference type="InterPro" id="IPR008921">
    <property type="entry name" value="DNA_pol3_clamp-load_cplx_C"/>
</dbReference>
<dbReference type="InterPro" id="IPR050238">
    <property type="entry name" value="DNA_Rep/Repair_Clamp_Loader"/>
</dbReference>
<dbReference type="InterPro" id="IPR027417">
    <property type="entry name" value="P-loop_NTPase"/>
</dbReference>
<dbReference type="InterPro" id="IPR013748">
    <property type="entry name" value="Rep_factorC_C"/>
</dbReference>
<dbReference type="InterPro" id="IPR047854">
    <property type="entry name" value="RFC_lid"/>
</dbReference>
<dbReference type="NCBIfam" id="NF001679">
    <property type="entry name" value="PRK00440.1"/>
    <property type="match status" value="1"/>
</dbReference>
<dbReference type="PANTHER" id="PTHR11669">
    <property type="entry name" value="REPLICATION FACTOR C / DNA POLYMERASE III GAMMA-TAU SUBUNIT"/>
    <property type="match status" value="1"/>
</dbReference>
<dbReference type="PANTHER" id="PTHR11669:SF5">
    <property type="entry name" value="REPLICATION FACTOR C SUBUNIT 2"/>
    <property type="match status" value="1"/>
</dbReference>
<dbReference type="Pfam" id="PF00004">
    <property type="entry name" value="AAA"/>
    <property type="match status" value="1"/>
</dbReference>
<dbReference type="Pfam" id="PF08542">
    <property type="entry name" value="Rep_fac_C"/>
    <property type="match status" value="1"/>
</dbReference>
<dbReference type="SMART" id="SM00382">
    <property type="entry name" value="AAA"/>
    <property type="match status" value="1"/>
</dbReference>
<dbReference type="SUPFAM" id="SSF52540">
    <property type="entry name" value="P-loop containing nucleoside triphosphate hydrolases"/>
    <property type="match status" value="1"/>
</dbReference>
<dbReference type="SUPFAM" id="SSF48019">
    <property type="entry name" value="post-AAA+ oligomerization domain-like"/>
    <property type="match status" value="1"/>
</dbReference>
<organism>
    <name type="scientific">Dictyostelium discoideum</name>
    <name type="common">Social amoeba</name>
    <dbReference type="NCBI Taxonomy" id="44689"/>
    <lineage>
        <taxon>Eukaryota</taxon>
        <taxon>Amoebozoa</taxon>
        <taxon>Evosea</taxon>
        <taxon>Eumycetozoa</taxon>
        <taxon>Dictyostelia</taxon>
        <taxon>Dictyosteliales</taxon>
        <taxon>Dictyosteliaceae</taxon>
        <taxon>Dictyostelium</taxon>
    </lineage>
</organism>
<protein>
    <recommendedName>
        <fullName>Probable replication factor C subunit 2</fullName>
    </recommendedName>
    <alternativeName>
        <fullName>Activator 1 subunit 2</fullName>
    </alternativeName>
</protein>
<reference key="1">
    <citation type="journal article" date="2005" name="Nature">
        <title>The genome of the social amoeba Dictyostelium discoideum.</title>
        <authorList>
            <person name="Eichinger L."/>
            <person name="Pachebat J.A."/>
            <person name="Gloeckner G."/>
            <person name="Rajandream M.A."/>
            <person name="Sucgang R."/>
            <person name="Berriman M."/>
            <person name="Song J."/>
            <person name="Olsen R."/>
            <person name="Szafranski K."/>
            <person name="Xu Q."/>
            <person name="Tunggal B."/>
            <person name="Kummerfeld S."/>
            <person name="Madera M."/>
            <person name="Konfortov B.A."/>
            <person name="Rivero F."/>
            <person name="Bankier A.T."/>
            <person name="Lehmann R."/>
            <person name="Hamlin N."/>
            <person name="Davies R."/>
            <person name="Gaudet P."/>
            <person name="Fey P."/>
            <person name="Pilcher K."/>
            <person name="Chen G."/>
            <person name="Saunders D."/>
            <person name="Sodergren E.J."/>
            <person name="Davis P."/>
            <person name="Kerhornou A."/>
            <person name="Nie X."/>
            <person name="Hall N."/>
            <person name="Anjard C."/>
            <person name="Hemphill L."/>
            <person name="Bason N."/>
            <person name="Farbrother P."/>
            <person name="Desany B."/>
            <person name="Just E."/>
            <person name="Morio T."/>
            <person name="Rost R."/>
            <person name="Churcher C.M."/>
            <person name="Cooper J."/>
            <person name="Haydock S."/>
            <person name="van Driessche N."/>
            <person name="Cronin A."/>
            <person name="Goodhead I."/>
            <person name="Muzny D.M."/>
            <person name="Mourier T."/>
            <person name="Pain A."/>
            <person name="Lu M."/>
            <person name="Harper D."/>
            <person name="Lindsay R."/>
            <person name="Hauser H."/>
            <person name="James K.D."/>
            <person name="Quiles M."/>
            <person name="Madan Babu M."/>
            <person name="Saito T."/>
            <person name="Buchrieser C."/>
            <person name="Wardroper A."/>
            <person name="Felder M."/>
            <person name="Thangavelu M."/>
            <person name="Johnson D."/>
            <person name="Knights A."/>
            <person name="Loulseged H."/>
            <person name="Mungall K.L."/>
            <person name="Oliver K."/>
            <person name="Price C."/>
            <person name="Quail M.A."/>
            <person name="Urushihara H."/>
            <person name="Hernandez J."/>
            <person name="Rabbinowitsch E."/>
            <person name="Steffen D."/>
            <person name="Sanders M."/>
            <person name="Ma J."/>
            <person name="Kohara Y."/>
            <person name="Sharp S."/>
            <person name="Simmonds M.N."/>
            <person name="Spiegler S."/>
            <person name="Tivey A."/>
            <person name="Sugano S."/>
            <person name="White B."/>
            <person name="Walker D."/>
            <person name="Woodward J.R."/>
            <person name="Winckler T."/>
            <person name="Tanaka Y."/>
            <person name="Shaulsky G."/>
            <person name="Schleicher M."/>
            <person name="Weinstock G.M."/>
            <person name="Rosenthal A."/>
            <person name="Cox E.C."/>
            <person name="Chisholm R.L."/>
            <person name="Gibbs R.A."/>
            <person name="Loomis W.F."/>
            <person name="Platzer M."/>
            <person name="Kay R.R."/>
            <person name="Williams J.G."/>
            <person name="Dear P.H."/>
            <person name="Noegel A.A."/>
            <person name="Barrell B.G."/>
            <person name="Kuspa A."/>
        </authorList>
    </citation>
    <scope>NUCLEOTIDE SEQUENCE [LARGE SCALE GENOMIC DNA]</scope>
    <source>
        <strain>AX4</strain>
    </source>
</reference>
<feature type="chain" id="PRO_0000330463" description="Probable replication factor C subunit 2">
    <location>
        <begin position="1"/>
        <end position="338"/>
    </location>
</feature>
<feature type="binding site" evidence="2">
    <location>
        <begin position="60"/>
        <end position="67"/>
    </location>
    <ligand>
        <name>ATP</name>
        <dbReference type="ChEBI" id="CHEBI:30616"/>
    </ligand>
</feature>
<comment type="function">
    <text evidence="1">The elongation of primed DNA templates by DNA polymerase delta and epsilon requires the action of the accessory proteins PCNA and activator 1.</text>
</comment>
<comment type="subunit">
    <text evidence="1">Heteropentamer of various rfc subunits that forms a complex (RFC) with PCNA in the presence of ATP.</text>
</comment>
<comment type="subcellular location">
    <subcellularLocation>
        <location evidence="1">Nucleus</location>
    </subcellularLocation>
</comment>
<comment type="similarity">
    <text evidence="3">Belongs to the activator 1 small subunits family.</text>
</comment>
<name>RFC2_DICDI</name>
<keyword id="KW-0067">ATP-binding</keyword>
<keyword id="KW-0235">DNA replication</keyword>
<keyword id="KW-0547">Nucleotide-binding</keyword>
<keyword id="KW-0539">Nucleus</keyword>
<keyword id="KW-1185">Reference proteome</keyword>
<accession>Q54E21</accession>